<keyword id="KW-0496">Mitochondrion</keyword>
<keyword id="KW-0809">Transit peptide</keyword>
<evidence type="ECO:0000250" key="1"/>
<evidence type="ECO:0000255" key="2"/>
<evidence type="ECO:0000305" key="3"/>
<sequence>MLSRVARYSRTLNQLTRTSQGGLLSAVLRTSIRQNSTDSPPSNSANEIYTKLSDTKDPQRNQFFQYTWGSWLTNDKSKKKQRETTFSIEGLTLFIDRINQLESKLGQPKSLEGAFVLTNNKELLGSTKEKVIVRSIASIHEGKHHRVYKITLNTGKDLVLRIPYKLDSDAAIASKLKSEVATIDFLKLKLGLNVPRVLAYGVDSNNELKSPFILQEFISGELLMKKWHPLLPDSEETNKNLHEVIDPIAQFQDKILSVTFKKFGSLYFHDDVEGSLQNDVPYEGETDSTLSNRWRIGPSVERQFTRNKSKLQQSIIDQYNGPWDASNTTALLESVADIELENAKSKLALINADAGANENDKVLITKQIKTFENLKKISPQLINDKSKSIMNVQELFKPRLYIPDLDPLNVIQHTESENYFIDFEGSTIKPFILTSYPKFVAYQGAKIYNLEEDVPGYKEMEELEKQQYDFMYYKTRNERMWELELNKYRHDLIAVASPHIKVLKSPYLQALDIKNGKDYLYVEGSIVQLQAMWEAYVANELVNSKDTKFPIEYTAEYLDQHQQELSDYQLETVSSPFSATGGWIPQDMFDTLKAQGILVETKDGDYKVETEKVLENPPSPSEEK</sequence>
<name>AIM9_CANDC</name>
<reference key="1">
    <citation type="journal article" date="2009" name="Genome Res.">
        <title>Comparative genomics of the fungal pathogens Candida dubliniensis and Candida albicans.</title>
        <authorList>
            <person name="Jackson A.P."/>
            <person name="Gamble J.A."/>
            <person name="Yeomans T."/>
            <person name="Moran G.P."/>
            <person name="Saunders D."/>
            <person name="Harris D."/>
            <person name="Aslett M."/>
            <person name="Barrell J.F."/>
            <person name="Butler G."/>
            <person name="Citiulo F."/>
            <person name="Coleman D.C."/>
            <person name="de Groot P.W.J."/>
            <person name="Goodwin T.J."/>
            <person name="Quail M.A."/>
            <person name="McQuillan J."/>
            <person name="Munro C.A."/>
            <person name="Pain A."/>
            <person name="Poulter R.T."/>
            <person name="Rajandream M.A."/>
            <person name="Renauld H."/>
            <person name="Spiering M.J."/>
            <person name="Tivey A."/>
            <person name="Gow N.A.R."/>
            <person name="Barrell B."/>
            <person name="Sullivan D.J."/>
            <person name="Berriman M."/>
        </authorList>
    </citation>
    <scope>NUCLEOTIDE SEQUENCE [LARGE SCALE GENOMIC DNA]</scope>
    <source>
        <strain>CD36 / ATCC MYA-646 / CBS 7987 / NCPF 3949 / NRRL Y-17841</strain>
    </source>
</reference>
<protein>
    <recommendedName>
        <fullName>Altered inheritance of mitochondria protein 9, mitochondrial</fullName>
    </recommendedName>
    <alternativeName>
        <fullName>Found in mitochondrial proteome protein 29</fullName>
    </alternativeName>
</protein>
<feature type="transit peptide" description="Mitochondrion" evidence="2">
    <location>
        <begin position="1"/>
        <end position="34"/>
    </location>
</feature>
<feature type="chain" id="PRO_0000408718" description="Altered inheritance of mitochondria protein 9, mitochondrial">
    <location>
        <begin position="35"/>
        <end position="624"/>
    </location>
</feature>
<organism>
    <name type="scientific">Candida dubliniensis (strain CD36 / ATCC MYA-646 / CBS 7987 / NCPF 3949 / NRRL Y-17841)</name>
    <name type="common">Yeast</name>
    <dbReference type="NCBI Taxonomy" id="573826"/>
    <lineage>
        <taxon>Eukaryota</taxon>
        <taxon>Fungi</taxon>
        <taxon>Dikarya</taxon>
        <taxon>Ascomycota</taxon>
        <taxon>Saccharomycotina</taxon>
        <taxon>Pichiomycetes</taxon>
        <taxon>Debaryomycetaceae</taxon>
        <taxon>Candida/Lodderomyces clade</taxon>
        <taxon>Candida</taxon>
    </lineage>
</organism>
<comment type="subcellular location">
    <subcellularLocation>
        <location evidence="1">Mitochondrion</location>
    </subcellularLocation>
</comment>
<comment type="similarity">
    <text evidence="3">Belongs to the AIM9 family.</text>
</comment>
<proteinExistence type="inferred from homology"/>
<dbReference type="EMBL" id="FM992688">
    <property type="protein sequence ID" value="CAX44378.1"/>
    <property type="molecule type" value="Genomic_DNA"/>
</dbReference>
<dbReference type="RefSeq" id="XP_002416793.1">
    <property type="nucleotide sequence ID" value="XM_002416748.1"/>
</dbReference>
<dbReference type="GeneID" id="8044326"/>
<dbReference type="KEGG" id="cdu:CD36_01160"/>
<dbReference type="CGD" id="CAL0000169567">
    <property type="gene designation" value="Cd36_01160"/>
</dbReference>
<dbReference type="eggNOG" id="ENOG502QV1E">
    <property type="taxonomic scope" value="Eukaryota"/>
</dbReference>
<dbReference type="HOGENOM" id="CLU_019189_0_1_1"/>
<dbReference type="OrthoDB" id="2968323at2759"/>
<dbReference type="Proteomes" id="UP000002605">
    <property type="component" value="Chromosome 1"/>
</dbReference>
<dbReference type="GO" id="GO:0005739">
    <property type="term" value="C:mitochondrion"/>
    <property type="evidence" value="ECO:0007669"/>
    <property type="project" value="UniProtKB-SubCell"/>
</dbReference>
<dbReference type="Gene3D" id="3.30.200.20">
    <property type="entry name" value="Phosphorylase Kinase, domain 1"/>
    <property type="match status" value="1"/>
</dbReference>
<dbReference type="InterPro" id="IPR002575">
    <property type="entry name" value="Aminoglycoside_PTrfase"/>
</dbReference>
<dbReference type="InterPro" id="IPR011009">
    <property type="entry name" value="Kinase-like_dom_sf"/>
</dbReference>
<dbReference type="InterPro" id="IPR051035">
    <property type="entry name" value="Mito_inheritance_9"/>
</dbReference>
<dbReference type="PANTHER" id="PTHR36091">
    <property type="entry name" value="ALTERED INHERITANCE OF MITOCHONDRIA PROTEIN 9, MITOCHONDRIAL"/>
    <property type="match status" value="1"/>
</dbReference>
<dbReference type="PANTHER" id="PTHR36091:SF1">
    <property type="entry name" value="ALTERED INHERITANCE OF MITOCHONDRIA PROTEIN 9, MITOCHONDRIAL"/>
    <property type="match status" value="1"/>
</dbReference>
<dbReference type="Pfam" id="PF01636">
    <property type="entry name" value="APH"/>
    <property type="match status" value="1"/>
</dbReference>
<dbReference type="SUPFAM" id="SSF56112">
    <property type="entry name" value="Protein kinase-like (PK-like)"/>
    <property type="match status" value="1"/>
</dbReference>
<accession>B9W6S2</accession>
<gene>
    <name type="primary">AIM9</name>
    <name type="synonym">FMP29</name>
    <name type="ORF">CD36_01160</name>
</gene>